<proteinExistence type="predicted"/>
<name>YPMA_BACSU</name>
<accession>P54395</accession>
<gene>
    <name type="primary">ypmA</name>
    <name type="ordered locus">BSU22390</name>
</gene>
<organism>
    <name type="scientific">Bacillus subtilis (strain 168)</name>
    <dbReference type="NCBI Taxonomy" id="224308"/>
    <lineage>
        <taxon>Bacteria</taxon>
        <taxon>Bacillati</taxon>
        <taxon>Bacillota</taxon>
        <taxon>Bacilli</taxon>
        <taxon>Bacillales</taxon>
        <taxon>Bacillaceae</taxon>
        <taxon>Bacillus</taxon>
    </lineage>
</organism>
<protein>
    <recommendedName>
        <fullName>Uncharacterized protein YpmA</fullName>
    </recommendedName>
</protein>
<feature type="chain" id="PRO_0000049709" description="Uncharacterized protein YpmA">
    <location>
        <begin position="1"/>
        <end position="56"/>
    </location>
</feature>
<reference key="1">
    <citation type="journal article" date="1996" name="Microbiology">
        <title>Sequence analysis of the Bacillus subtilis chromosome region between the serA and kdg loci cloned in a yeast artificial chromosome.</title>
        <authorList>
            <person name="Sorokin A.V."/>
            <person name="Azevedo V."/>
            <person name="Zumstein E."/>
            <person name="Galleron N."/>
            <person name="Ehrlich S.D."/>
            <person name="Serror P."/>
        </authorList>
    </citation>
    <scope>NUCLEOTIDE SEQUENCE [GENOMIC DNA]</scope>
    <source>
        <strain>168 / Marburg / ATCC 6051 / DSM 10 / JCM 1465 / NBRC 13719 / NCIMB 3610 / NRRL NRS-744 / VKM B-501</strain>
    </source>
</reference>
<reference key="2">
    <citation type="journal article" date="1997" name="Nature">
        <title>The complete genome sequence of the Gram-positive bacterium Bacillus subtilis.</title>
        <authorList>
            <person name="Kunst F."/>
            <person name="Ogasawara N."/>
            <person name="Moszer I."/>
            <person name="Albertini A.M."/>
            <person name="Alloni G."/>
            <person name="Azevedo V."/>
            <person name="Bertero M.G."/>
            <person name="Bessieres P."/>
            <person name="Bolotin A."/>
            <person name="Borchert S."/>
            <person name="Borriss R."/>
            <person name="Boursier L."/>
            <person name="Brans A."/>
            <person name="Braun M."/>
            <person name="Brignell S.C."/>
            <person name="Bron S."/>
            <person name="Brouillet S."/>
            <person name="Bruschi C.V."/>
            <person name="Caldwell B."/>
            <person name="Capuano V."/>
            <person name="Carter N.M."/>
            <person name="Choi S.-K."/>
            <person name="Codani J.-J."/>
            <person name="Connerton I.F."/>
            <person name="Cummings N.J."/>
            <person name="Daniel R.A."/>
            <person name="Denizot F."/>
            <person name="Devine K.M."/>
            <person name="Duesterhoeft A."/>
            <person name="Ehrlich S.D."/>
            <person name="Emmerson P.T."/>
            <person name="Entian K.-D."/>
            <person name="Errington J."/>
            <person name="Fabret C."/>
            <person name="Ferrari E."/>
            <person name="Foulger D."/>
            <person name="Fritz C."/>
            <person name="Fujita M."/>
            <person name="Fujita Y."/>
            <person name="Fuma S."/>
            <person name="Galizzi A."/>
            <person name="Galleron N."/>
            <person name="Ghim S.-Y."/>
            <person name="Glaser P."/>
            <person name="Goffeau A."/>
            <person name="Golightly E.J."/>
            <person name="Grandi G."/>
            <person name="Guiseppi G."/>
            <person name="Guy B.J."/>
            <person name="Haga K."/>
            <person name="Haiech J."/>
            <person name="Harwood C.R."/>
            <person name="Henaut A."/>
            <person name="Hilbert H."/>
            <person name="Holsappel S."/>
            <person name="Hosono S."/>
            <person name="Hullo M.-F."/>
            <person name="Itaya M."/>
            <person name="Jones L.-M."/>
            <person name="Joris B."/>
            <person name="Karamata D."/>
            <person name="Kasahara Y."/>
            <person name="Klaerr-Blanchard M."/>
            <person name="Klein C."/>
            <person name="Kobayashi Y."/>
            <person name="Koetter P."/>
            <person name="Koningstein G."/>
            <person name="Krogh S."/>
            <person name="Kumano M."/>
            <person name="Kurita K."/>
            <person name="Lapidus A."/>
            <person name="Lardinois S."/>
            <person name="Lauber J."/>
            <person name="Lazarevic V."/>
            <person name="Lee S.-M."/>
            <person name="Levine A."/>
            <person name="Liu H."/>
            <person name="Masuda S."/>
            <person name="Mauel C."/>
            <person name="Medigue C."/>
            <person name="Medina N."/>
            <person name="Mellado R.P."/>
            <person name="Mizuno M."/>
            <person name="Moestl D."/>
            <person name="Nakai S."/>
            <person name="Noback M."/>
            <person name="Noone D."/>
            <person name="O'Reilly M."/>
            <person name="Ogawa K."/>
            <person name="Ogiwara A."/>
            <person name="Oudega B."/>
            <person name="Park S.-H."/>
            <person name="Parro V."/>
            <person name="Pohl T.M."/>
            <person name="Portetelle D."/>
            <person name="Porwollik S."/>
            <person name="Prescott A.M."/>
            <person name="Presecan E."/>
            <person name="Pujic P."/>
            <person name="Purnelle B."/>
            <person name="Rapoport G."/>
            <person name="Rey M."/>
            <person name="Reynolds S."/>
            <person name="Rieger M."/>
            <person name="Rivolta C."/>
            <person name="Rocha E."/>
            <person name="Roche B."/>
            <person name="Rose M."/>
            <person name="Sadaie Y."/>
            <person name="Sato T."/>
            <person name="Scanlan E."/>
            <person name="Schleich S."/>
            <person name="Schroeter R."/>
            <person name="Scoffone F."/>
            <person name="Sekiguchi J."/>
            <person name="Sekowska A."/>
            <person name="Seror S.J."/>
            <person name="Serror P."/>
            <person name="Shin B.-S."/>
            <person name="Soldo B."/>
            <person name="Sorokin A."/>
            <person name="Tacconi E."/>
            <person name="Takagi T."/>
            <person name="Takahashi H."/>
            <person name="Takemaru K."/>
            <person name="Takeuchi M."/>
            <person name="Tamakoshi A."/>
            <person name="Tanaka T."/>
            <person name="Terpstra P."/>
            <person name="Tognoni A."/>
            <person name="Tosato V."/>
            <person name="Uchiyama S."/>
            <person name="Vandenbol M."/>
            <person name="Vannier F."/>
            <person name="Vassarotti A."/>
            <person name="Viari A."/>
            <person name="Wambutt R."/>
            <person name="Wedler E."/>
            <person name="Wedler H."/>
            <person name="Weitzenegger T."/>
            <person name="Winters P."/>
            <person name="Wipat A."/>
            <person name="Yamamoto H."/>
            <person name="Yamane K."/>
            <person name="Yasumoto K."/>
            <person name="Yata K."/>
            <person name="Yoshida K."/>
            <person name="Yoshikawa H.-F."/>
            <person name="Zumstein E."/>
            <person name="Yoshikawa H."/>
            <person name="Danchin A."/>
        </authorList>
    </citation>
    <scope>NUCLEOTIDE SEQUENCE [LARGE SCALE GENOMIC DNA]</scope>
    <source>
        <strain>168</strain>
    </source>
</reference>
<dbReference type="EMBL" id="L47709">
    <property type="protein sequence ID" value="AAB38452.1"/>
    <property type="molecule type" value="Genomic_DNA"/>
</dbReference>
<dbReference type="EMBL" id="AL009126">
    <property type="protein sequence ID" value="CAB14155.1"/>
    <property type="molecule type" value="Genomic_DNA"/>
</dbReference>
<dbReference type="PIR" id="E69938">
    <property type="entry name" value="E69938"/>
</dbReference>
<dbReference type="RefSeq" id="NP_390120.1">
    <property type="nucleotide sequence ID" value="NC_000964.3"/>
</dbReference>
<dbReference type="RefSeq" id="WP_003225588.1">
    <property type="nucleotide sequence ID" value="NZ_OZ025638.1"/>
</dbReference>
<dbReference type="FunCoup" id="P54395">
    <property type="interactions" value="31"/>
</dbReference>
<dbReference type="STRING" id="224308.BSU22390"/>
<dbReference type="PaxDb" id="224308-BSU22390"/>
<dbReference type="EnsemblBacteria" id="CAB14155">
    <property type="protein sequence ID" value="CAB14155"/>
    <property type="gene ID" value="BSU_22390"/>
</dbReference>
<dbReference type="GeneID" id="939034"/>
<dbReference type="KEGG" id="bsu:BSU22390"/>
<dbReference type="PATRIC" id="fig|224308.179.peg.2443"/>
<dbReference type="eggNOG" id="ENOG50332IZ">
    <property type="taxonomic scope" value="Bacteria"/>
</dbReference>
<dbReference type="InParanoid" id="P54395"/>
<dbReference type="OrthoDB" id="2382360at2"/>
<dbReference type="BioCyc" id="BSUB:BSU22390-MONOMER"/>
<dbReference type="PRO" id="PR:P54395"/>
<dbReference type="Proteomes" id="UP000001570">
    <property type="component" value="Chromosome"/>
</dbReference>
<dbReference type="InterPro" id="IPR012190">
    <property type="entry name" value="UCP036698"/>
</dbReference>
<dbReference type="Pfam" id="PF14084">
    <property type="entry name" value="DUF4264"/>
    <property type="match status" value="1"/>
</dbReference>
<dbReference type="PIRSF" id="PIRSF036698">
    <property type="entry name" value="UCP036698"/>
    <property type="match status" value="1"/>
</dbReference>
<sequence>MESKIEILSTINVEHSDDLYKIVDTLNRTLKRDNLMFGLALDEENKNQAVFTIYRT</sequence>
<keyword id="KW-1185">Reference proteome</keyword>